<accession>Q21M42</accession>
<protein>
    <recommendedName>
        <fullName evidence="1">Large ribosomal subunit protein uL18</fullName>
    </recommendedName>
    <alternativeName>
        <fullName evidence="2">50S ribosomal protein L18</fullName>
    </alternativeName>
</protein>
<dbReference type="EMBL" id="CP000282">
    <property type="protein sequence ID" value="ABD80237.1"/>
    <property type="molecule type" value="Genomic_DNA"/>
</dbReference>
<dbReference type="RefSeq" id="WP_011467457.1">
    <property type="nucleotide sequence ID" value="NC_007912.1"/>
</dbReference>
<dbReference type="SMR" id="Q21M42"/>
<dbReference type="STRING" id="203122.Sde_0975"/>
<dbReference type="GeneID" id="98612661"/>
<dbReference type="KEGG" id="sde:Sde_0975"/>
<dbReference type="eggNOG" id="COG0256">
    <property type="taxonomic scope" value="Bacteria"/>
</dbReference>
<dbReference type="HOGENOM" id="CLU_098841_0_1_6"/>
<dbReference type="OrthoDB" id="9810939at2"/>
<dbReference type="Proteomes" id="UP000001947">
    <property type="component" value="Chromosome"/>
</dbReference>
<dbReference type="GO" id="GO:0022625">
    <property type="term" value="C:cytosolic large ribosomal subunit"/>
    <property type="evidence" value="ECO:0007669"/>
    <property type="project" value="TreeGrafter"/>
</dbReference>
<dbReference type="GO" id="GO:0008097">
    <property type="term" value="F:5S rRNA binding"/>
    <property type="evidence" value="ECO:0007669"/>
    <property type="project" value="TreeGrafter"/>
</dbReference>
<dbReference type="GO" id="GO:0003735">
    <property type="term" value="F:structural constituent of ribosome"/>
    <property type="evidence" value="ECO:0007669"/>
    <property type="project" value="InterPro"/>
</dbReference>
<dbReference type="GO" id="GO:0006412">
    <property type="term" value="P:translation"/>
    <property type="evidence" value="ECO:0007669"/>
    <property type="project" value="UniProtKB-UniRule"/>
</dbReference>
<dbReference type="CDD" id="cd00432">
    <property type="entry name" value="Ribosomal_L18_L5e"/>
    <property type="match status" value="1"/>
</dbReference>
<dbReference type="FunFam" id="3.30.420.100:FF:000001">
    <property type="entry name" value="50S ribosomal protein L18"/>
    <property type="match status" value="1"/>
</dbReference>
<dbReference type="Gene3D" id="3.30.420.100">
    <property type="match status" value="1"/>
</dbReference>
<dbReference type="HAMAP" id="MF_01337_B">
    <property type="entry name" value="Ribosomal_uL18_B"/>
    <property type="match status" value="1"/>
</dbReference>
<dbReference type="InterPro" id="IPR004389">
    <property type="entry name" value="Ribosomal_uL18_bac-type"/>
</dbReference>
<dbReference type="InterPro" id="IPR005484">
    <property type="entry name" value="Ribosomal_uL18_bac/euk"/>
</dbReference>
<dbReference type="NCBIfam" id="TIGR00060">
    <property type="entry name" value="L18_bact"/>
    <property type="match status" value="1"/>
</dbReference>
<dbReference type="PANTHER" id="PTHR12899">
    <property type="entry name" value="39S RIBOSOMAL PROTEIN L18, MITOCHONDRIAL"/>
    <property type="match status" value="1"/>
</dbReference>
<dbReference type="PANTHER" id="PTHR12899:SF3">
    <property type="entry name" value="LARGE RIBOSOMAL SUBUNIT PROTEIN UL18M"/>
    <property type="match status" value="1"/>
</dbReference>
<dbReference type="Pfam" id="PF00861">
    <property type="entry name" value="Ribosomal_L18p"/>
    <property type="match status" value="1"/>
</dbReference>
<dbReference type="SUPFAM" id="SSF53137">
    <property type="entry name" value="Translational machinery components"/>
    <property type="match status" value="1"/>
</dbReference>
<sequence length="116" mass="12514">MNAKKQSRIRRARRARAKMKELGVSRLCVNRTPRHIYAQVISAEGDRVVASASTLDKDLRSGSTGNRDAASAVGKLIAERAKAAGVSTVAFDRSGFKYHGRVKALADAAREGGLEF</sequence>
<gene>
    <name evidence="1" type="primary">rplR</name>
    <name type="ordered locus">Sde_0975</name>
</gene>
<feature type="chain" id="PRO_0000251365" description="Large ribosomal subunit protein uL18">
    <location>
        <begin position="1"/>
        <end position="116"/>
    </location>
</feature>
<reference key="1">
    <citation type="journal article" date="2008" name="PLoS Genet.">
        <title>Complete genome sequence of the complex carbohydrate-degrading marine bacterium, Saccharophagus degradans strain 2-40 T.</title>
        <authorList>
            <person name="Weiner R.M."/>
            <person name="Taylor L.E. II"/>
            <person name="Henrissat B."/>
            <person name="Hauser L."/>
            <person name="Land M."/>
            <person name="Coutinho P.M."/>
            <person name="Rancurel C."/>
            <person name="Saunders E.H."/>
            <person name="Longmire A.G."/>
            <person name="Zhang H."/>
            <person name="Bayer E.A."/>
            <person name="Gilbert H.J."/>
            <person name="Larimer F."/>
            <person name="Zhulin I.B."/>
            <person name="Ekborg N.A."/>
            <person name="Lamed R."/>
            <person name="Richardson P.M."/>
            <person name="Borovok I."/>
            <person name="Hutcheson S."/>
        </authorList>
    </citation>
    <scope>NUCLEOTIDE SEQUENCE [LARGE SCALE GENOMIC DNA]</scope>
    <source>
        <strain>2-40 / ATCC 43961 / DSM 17024</strain>
    </source>
</reference>
<name>RL18_SACD2</name>
<evidence type="ECO:0000255" key="1">
    <source>
        <dbReference type="HAMAP-Rule" id="MF_01337"/>
    </source>
</evidence>
<evidence type="ECO:0000305" key="2"/>
<proteinExistence type="inferred from homology"/>
<keyword id="KW-1185">Reference proteome</keyword>
<keyword id="KW-0687">Ribonucleoprotein</keyword>
<keyword id="KW-0689">Ribosomal protein</keyword>
<keyword id="KW-0694">RNA-binding</keyword>
<keyword id="KW-0699">rRNA-binding</keyword>
<comment type="function">
    <text evidence="1">This is one of the proteins that bind and probably mediate the attachment of the 5S RNA into the large ribosomal subunit, where it forms part of the central protuberance.</text>
</comment>
<comment type="subunit">
    <text evidence="1">Part of the 50S ribosomal subunit; part of the 5S rRNA/L5/L18/L25 subcomplex. Contacts the 5S and 23S rRNAs.</text>
</comment>
<comment type="similarity">
    <text evidence="1">Belongs to the universal ribosomal protein uL18 family.</text>
</comment>
<organism>
    <name type="scientific">Saccharophagus degradans (strain 2-40 / ATCC 43961 / DSM 17024)</name>
    <dbReference type="NCBI Taxonomy" id="203122"/>
    <lineage>
        <taxon>Bacteria</taxon>
        <taxon>Pseudomonadati</taxon>
        <taxon>Pseudomonadota</taxon>
        <taxon>Gammaproteobacteria</taxon>
        <taxon>Cellvibrionales</taxon>
        <taxon>Cellvibrionaceae</taxon>
        <taxon>Saccharophagus</taxon>
    </lineage>
</organism>